<organism>
    <name type="scientific">Bacillus thuringiensis</name>
    <dbReference type="NCBI Taxonomy" id="1428"/>
    <lineage>
        <taxon>Bacteria</taxon>
        <taxon>Bacillati</taxon>
        <taxon>Bacillota</taxon>
        <taxon>Bacilli</taxon>
        <taxon>Bacillales</taxon>
        <taxon>Bacillaceae</taxon>
        <taxon>Bacillus</taxon>
        <taxon>Bacillus cereus group</taxon>
    </lineage>
</organism>
<gene>
    <name type="primary">tnpI</name>
</gene>
<name>TNRI_BACTU</name>
<feature type="chain" id="PRO_0000197549" description="TnP I resolvase">
    <location>
        <begin position="1"/>
        <end position="284"/>
    </location>
</feature>
<feature type="domain" description="Core-binding (CB)" evidence="2">
    <location>
        <begin position="1"/>
        <end position="84"/>
    </location>
</feature>
<feature type="domain" description="Tyr recombinase" evidence="1">
    <location>
        <begin position="107"/>
        <end position="282"/>
    </location>
</feature>
<feature type="active site" evidence="1">
    <location>
        <position position="145"/>
    </location>
</feature>
<feature type="active site" evidence="1">
    <location>
        <position position="170"/>
    </location>
</feature>
<feature type="active site" evidence="1">
    <location>
        <position position="234"/>
    </location>
</feature>
<feature type="active site" evidence="1">
    <location>
        <position position="237"/>
    </location>
</feature>
<feature type="active site" evidence="1">
    <location>
        <position position="260"/>
    </location>
</feature>
<feature type="active site" description="O-(3'-phospho-DNA)-tyrosine intermediate" evidence="1">
    <location>
        <position position="269"/>
    </location>
</feature>
<comment type="function">
    <text>Resolvase catalyzes the resolution (a site-specific recombination) of the cointegrated replicon to yield the final transposition products.</text>
</comment>
<comment type="similarity">
    <text evidence="3">Belongs to the 'phage' integrase family.</text>
</comment>
<dbReference type="EMBL" id="X13481">
    <property type="protein sequence ID" value="CAA31832.1"/>
    <property type="molecule type" value="Genomic_DNA"/>
</dbReference>
<dbReference type="EMBL" id="X07651">
    <property type="protein sequence ID" value="CAA30491.1"/>
    <property type="molecule type" value="Genomic_DNA"/>
</dbReference>
<dbReference type="PIR" id="S00554">
    <property type="entry name" value="RSBSTI"/>
</dbReference>
<dbReference type="RefSeq" id="WP_000382147.1">
    <property type="nucleotide sequence ID" value="NZ_VLPR01000118.1"/>
</dbReference>
<dbReference type="RefSeq" id="YP_001485222.1">
    <property type="nucleotide sequence ID" value="NC_009841.1"/>
</dbReference>
<dbReference type="SMR" id="P10020"/>
<dbReference type="GeneID" id="67470162"/>
<dbReference type="GO" id="GO:0003677">
    <property type="term" value="F:DNA binding"/>
    <property type="evidence" value="ECO:0007669"/>
    <property type="project" value="UniProtKB-KW"/>
</dbReference>
<dbReference type="GO" id="GO:0015074">
    <property type="term" value="P:DNA integration"/>
    <property type="evidence" value="ECO:0007669"/>
    <property type="project" value="UniProtKB-KW"/>
</dbReference>
<dbReference type="GO" id="GO:0006310">
    <property type="term" value="P:DNA recombination"/>
    <property type="evidence" value="ECO:0007669"/>
    <property type="project" value="UniProtKB-KW"/>
</dbReference>
<dbReference type="CDD" id="cd00397">
    <property type="entry name" value="DNA_BRE_C"/>
    <property type="match status" value="1"/>
</dbReference>
<dbReference type="Gene3D" id="1.10.150.130">
    <property type="match status" value="1"/>
</dbReference>
<dbReference type="Gene3D" id="1.10.443.10">
    <property type="entry name" value="Intergrase catalytic core"/>
    <property type="match status" value="1"/>
</dbReference>
<dbReference type="InterPro" id="IPR044068">
    <property type="entry name" value="CB"/>
</dbReference>
<dbReference type="InterPro" id="IPR011010">
    <property type="entry name" value="DNA_brk_join_enz"/>
</dbReference>
<dbReference type="InterPro" id="IPR013762">
    <property type="entry name" value="Integrase-like_cat_sf"/>
</dbReference>
<dbReference type="InterPro" id="IPR002104">
    <property type="entry name" value="Integrase_catalytic"/>
</dbReference>
<dbReference type="InterPro" id="IPR010998">
    <property type="entry name" value="Integrase_recombinase_N"/>
</dbReference>
<dbReference type="InterPro" id="IPR004107">
    <property type="entry name" value="Integrase_SAM-like_N"/>
</dbReference>
<dbReference type="InterPro" id="IPR050090">
    <property type="entry name" value="Tyrosine_recombinase_XerCD"/>
</dbReference>
<dbReference type="PANTHER" id="PTHR30349">
    <property type="entry name" value="PHAGE INTEGRASE-RELATED"/>
    <property type="match status" value="1"/>
</dbReference>
<dbReference type="PANTHER" id="PTHR30349:SF81">
    <property type="entry name" value="TYROSINE RECOMBINASE XERC"/>
    <property type="match status" value="1"/>
</dbReference>
<dbReference type="Pfam" id="PF02899">
    <property type="entry name" value="Phage_int_SAM_1"/>
    <property type="match status" value="1"/>
</dbReference>
<dbReference type="Pfam" id="PF00589">
    <property type="entry name" value="Phage_integrase"/>
    <property type="match status" value="1"/>
</dbReference>
<dbReference type="SUPFAM" id="SSF56349">
    <property type="entry name" value="DNA breaking-rejoining enzymes"/>
    <property type="match status" value="1"/>
</dbReference>
<dbReference type="PROSITE" id="PS51900">
    <property type="entry name" value="CB"/>
    <property type="match status" value="1"/>
</dbReference>
<dbReference type="PROSITE" id="PS51898">
    <property type="entry name" value="TYR_RECOMBINASE"/>
    <property type="match status" value="1"/>
</dbReference>
<accession>P10020</accession>
<geneLocation type="plasmid">
    <name>pGI2</name>
</geneLocation>
<protein>
    <recommendedName>
        <fullName>TnP I resolvase</fullName>
    </recommendedName>
</protein>
<keyword id="KW-0229">DNA integration</keyword>
<keyword id="KW-0233">DNA recombination</keyword>
<keyword id="KW-0238">DNA-binding</keyword>
<keyword id="KW-0614">Plasmid</keyword>
<keyword id="KW-0814">Transposable element</keyword>
<proteinExistence type="inferred from homology"/>
<evidence type="ECO:0000255" key="1">
    <source>
        <dbReference type="PROSITE-ProRule" id="PRU01246"/>
    </source>
</evidence>
<evidence type="ECO:0000255" key="2">
    <source>
        <dbReference type="PROSITE-ProRule" id="PRU01248"/>
    </source>
</evidence>
<evidence type="ECO:0000305" key="3"/>
<sequence>MDVAKQFSSYLKQENKTENTVQGYTSGIRQYIKWFEGSYDRKLTKLYRQNILEYISYLKNVKMLNAKSINHKISSLAKFNEFLIQKGSQQDQVILKTDMIKVQTVYASPTQIVELDVKKFLQSVLEDNNKRNYAIATLLAYTGVRISEALSIKMNDFNLQTGECIIRSGKGGKQRIVLLNSKVLSAIKDYLIDRKTYSTAHESPYLFISKKREKLDRTVVNRIFKSYSNVITPHQLRHFFCTNAIEKGFSIHEVANQAGHSNIHTTLLYTNPNQLQLKNKMELL</sequence>
<reference key="1">
    <citation type="journal article" date="1988" name="Nucleic Acids Res.">
        <title>Complete nucleotide sequence of pGI2, a Bacillus thuringiensis plasmid containing Tn4430.</title>
        <authorList>
            <person name="Mahillon J."/>
            <person name="Seurinck J."/>
        </authorList>
    </citation>
    <scope>NUCLEOTIDE SEQUENCE [GENOMIC DNA]</scope>
    <source>
        <strain>H1.1</strain>
    </source>
</reference>
<reference key="2">
    <citation type="journal article" date="1988" name="EMBO J.">
        <title>Structural and functional analysis of Tn4430: identification of an integrase-like protein involved in the co-integrate-resolution process.</title>
        <authorList>
            <person name="Mahillon J."/>
            <person name="Lereclus D."/>
        </authorList>
    </citation>
    <scope>NUCLEOTIDE SEQUENCE [GENOMIC DNA]</scope>
    <source>
        <strain>H1.1</strain>
        <transposon>Tn4430</transposon>
    </source>
</reference>